<feature type="chain" id="PRO_0000079130" description="Nucleoprotein">
    <location>
        <begin position="1"/>
        <end position="498"/>
    </location>
</feature>
<feature type="region of interest" description="Disordered" evidence="2">
    <location>
        <begin position="1"/>
        <end position="21"/>
    </location>
</feature>
<feature type="short sequence motif" description="Unconventional nuclear localization signal" evidence="1">
    <location>
        <begin position="1"/>
        <end position="18"/>
    </location>
</feature>
<feature type="short sequence motif" description="Bipartite nuclear localization signal" evidence="1">
    <location>
        <begin position="198"/>
        <end position="216"/>
    </location>
</feature>
<organismHost>
    <name type="scientific">Aves</name>
    <dbReference type="NCBI Taxonomy" id="8782"/>
</organismHost>
<organismHost>
    <name type="scientific">Homo sapiens</name>
    <name type="common">Human</name>
    <dbReference type="NCBI Taxonomy" id="9606"/>
</organismHost>
<organismHost>
    <name type="scientific">Sus scrofa</name>
    <name type="common">Pig</name>
    <dbReference type="NCBI Taxonomy" id="9823"/>
</organismHost>
<reference key="1">
    <citation type="journal article" date="1991" name="J. Virol.">
        <title>Evolution of influenza A virus nucleoprotein genes: implications for the origins of H1N1 human and classical swine viruses.</title>
        <authorList>
            <person name="Gorman O.T."/>
            <person name="Bean W.J."/>
            <person name="Kawaoka Y."/>
            <person name="Donatelli I."/>
            <person name="Guo Y."/>
            <person name="Webster R.G."/>
        </authorList>
    </citation>
    <scope>NUCLEOTIDE SEQUENCE [GENOMIC RNA]</scope>
</reference>
<dbReference type="EMBL" id="M63772">
    <property type="protein sequence ID" value="AAA52271.1"/>
    <property type="molecule type" value="Genomic_RNA"/>
</dbReference>
<dbReference type="SMR" id="P26092"/>
<dbReference type="GO" id="GO:0019029">
    <property type="term" value="C:helical viral capsid"/>
    <property type="evidence" value="ECO:0007669"/>
    <property type="project" value="UniProtKB-UniRule"/>
</dbReference>
<dbReference type="GO" id="GO:0043657">
    <property type="term" value="C:host cell"/>
    <property type="evidence" value="ECO:0007669"/>
    <property type="project" value="GOC"/>
</dbReference>
<dbReference type="GO" id="GO:0042025">
    <property type="term" value="C:host cell nucleus"/>
    <property type="evidence" value="ECO:0007669"/>
    <property type="project" value="UniProtKB-SubCell"/>
</dbReference>
<dbReference type="GO" id="GO:1990904">
    <property type="term" value="C:ribonucleoprotein complex"/>
    <property type="evidence" value="ECO:0007669"/>
    <property type="project" value="UniProtKB-KW"/>
</dbReference>
<dbReference type="GO" id="GO:0019013">
    <property type="term" value="C:viral nucleocapsid"/>
    <property type="evidence" value="ECO:0007669"/>
    <property type="project" value="UniProtKB-UniRule"/>
</dbReference>
<dbReference type="GO" id="GO:0003723">
    <property type="term" value="F:RNA binding"/>
    <property type="evidence" value="ECO:0007669"/>
    <property type="project" value="UniProtKB-UniRule"/>
</dbReference>
<dbReference type="GO" id="GO:0005198">
    <property type="term" value="F:structural molecule activity"/>
    <property type="evidence" value="ECO:0007669"/>
    <property type="project" value="UniProtKB-UniRule"/>
</dbReference>
<dbReference type="GO" id="GO:0046718">
    <property type="term" value="P:symbiont entry into host cell"/>
    <property type="evidence" value="ECO:0007669"/>
    <property type="project" value="UniProtKB-KW"/>
</dbReference>
<dbReference type="GO" id="GO:0075732">
    <property type="term" value="P:viral penetration into host nucleus"/>
    <property type="evidence" value="ECO:0007669"/>
    <property type="project" value="UniProtKB-UniRule"/>
</dbReference>
<dbReference type="HAMAP" id="MF_04070">
    <property type="entry name" value="INFV_NCAP"/>
    <property type="match status" value="1"/>
</dbReference>
<dbReference type="InterPro" id="IPR002141">
    <property type="entry name" value="Flu_NP"/>
</dbReference>
<dbReference type="Pfam" id="PF00506">
    <property type="entry name" value="Flu_NP"/>
    <property type="match status" value="1"/>
</dbReference>
<dbReference type="SUPFAM" id="SSF161003">
    <property type="entry name" value="flu NP-like"/>
    <property type="match status" value="1"/>
</dbReference>
<evidence type="ECO:0000255" key="1">
    <source>
        <dbReference type="HAMAP-Rule" id="MF_04070"/>
    </source>
</evidence>
<evidence type="ECO:0000256" key="2">
    <source>
        <dbReference type="SAM" id="MobiDB-lite"/>
    </source>
</evidence>
<keyword id="KW-0167">Capsid protein</keyword>
<keyword id="KW-1139">Helical capsid protein</keyword>
<keyword id="KW-1048">Host nucleus</keyword>
<keyword id="KW-0945">Host-virus interaction</keyword>
<keyword id="KW-0687">Ribonucleoprotein</keyword>
<keyword id="KW-0694">RNA-binding</keyword>
<keyword id="KW-0543">Viral nucleoprotein</keyword>
<keyword id="KW-1163">Viral penetration into host nucleus</keyword>
<keyword id="KW-0946">Virion</keyword>
<keyword id="KW-1160">Virus entry into host cell</keyword>
<sequence>MASQGTKRSYEQMETGGERQNATEIRASVGRMVGGIGRFYIQMCTELQLSDYEGRLIQNSITIERMVLSAFDERRNKYLEEHPSAGKDPKKTGGPIYKKRDGKWMRELILYDKEEIRRIWRQANNGEDATAGLTHLMIWHSNLNDATYQRTRALVRTGMDPRMCSLMQGSTLPRRSGAAGAAVKGVGTMVMELIRMIKRGINDRNFWRGENGRRTRIAYERMCNILKGKFQTAAQRAMMDQVRESRNPGNAEIEDLIFLARSALILRGSVAHKSCLPACVYGLVVASGYDFEREGYSLVGIDPFRLLQNSQVFSLIRPNENPVHKSQLVWMACHSAAFEDLRVSSFIRGTKVVPRGQLSTRGVQIASNENMETMDSITLELRSKYWAIRTRSGGNTNQQRASAGQISVQPTFSVQRNLPFERATIMAAFTGNTEGRTSDMRTEIIRMMESARPEDVSFQGRGVFELSDEKATNPIVPSFDMSNEGSYFFGDNAEEYGN</sequence>
<proteinExistence type="inferred from homology"/>
<organism>
    <name type="scientific">Influenza A virus (strain A/Swine/Italy/839/1989 H1N1)</name>
    <dbReference type="NCBI Taxonomy" id="382851"/>
    <lineage>
        <taxon>Viruses</taxon>
        <taxon>Riboviria</taxon>
        <taxon>Orthornavirae</taxon>
        <taxon>Negarnaviricota</taxon>
        <taxon>Polyploviricotina</taxon>
        <taxon>Insthoviricetes</taxon>
        <taxon>Articulavirales</taxon>
        <taxon>Orthomyxoviridae</taxon>
        <taxon>Alphainfluenzavirus</taxon>
        <taxon>Alphainfluenzavirus influenzae</taxon>
        <taxon>Influenza A virus</taxon>
    </lineage>
</organism>
<name>NCAP_I89A6</name>
<comment type="function">
    <text evidence="1">Encapsidates the negative strand viral RNA, protecting it from nucleases. The encapsidated genomic RNA is termed the ribonucleoprotein (RNP) and serves as template for transcription and replication. The RNP needs to be localized in the host nucleus to start an infectious cycle, but is too large to diffuse through the nuclear pore complex. NP comprises at least 2 nuclear localization signals that are responsible for the active RNP import into the nucleus through cellular importin alpha/beta pathway. Later in the infection, nclear export of RNPs are mediated through viral proteins NEP interacting with M1 which binds nucleoproteins. It is possible that nucleoprotein binds directly host exportin-1/XPO1 and plays an active role in RNPs nuclear export. M1 interaction with RNP seems to hide nucleoprotein's nuclear localization signals. Soon after a virion infects a new cell, M1 dissociates from the RNP under acidification of the virion driven by M2 protein. Dissociation of M1 from RNP unmasks nucleoprotein's nuclear localization signals, targeting the RNP to the nucleus.</text>
</comment>
<comment type="subunit">
    <text evidence="1">Homomultimerizes to form the nucleocapsid. May bind host exportin-1/XPO1. Binds to viral genomic RNA. Protein-RNA contacts are mediated by a combination of electrostatic interactions between positively charged residues and the phosphate backbone and planar interactions between aromatic side chains and bases.</text>
</comment>
<comment type="subcellular location">
    <subcellularLocation>
        <location evidence="1">Virion</location>
    </subcellularLocation>
    <subcellularLocation>
        <location evidence="1">Host nucleus</location>
    </subcellularLocation>
</comment>
<comment type="PTM">
    <text evidence="1">Late in virus-infected cells, may be cleaved from a 56-kDa protein to a 53-kDa protein by a cellular caspase. This cleavage might be a marker for the onset of apoptosis in infected cells or have a specific function in virus host interaction.</text>
</comment>
<comment type="similarity">
    <text evidence="1">Belongs to the influenza viruses nucleoprotein family.</text>
</comment>
<gene>
    <name evidence="1" type="primary">NP</name>
</gene>
<accession>P26092</accession>
<protein>
    <recommendedName>
        <fullName evidence="1">Nucleoprotein</fullName>
    </recommendedName>
    <alternativeName>
        <fullName evidence="1">Nucleocapsid protein</fullName>
        <shortName evidence="1">Protein N</shortName>
    </alternativeName>
</protein>